<name>HXD10_HETFR</name>
<proteinExistence type="inferred from homology"/>
<keyword id="KW-0217">Developmental protein</keyword>
<keyword id="KW-0238">DNA-binding</keyword>
<keyword id="KW-0371">Homeobox</keyword>
<keyword id="KW-0539">Nucleus</keyword>
<keyword id="KW-0804">Transcription</keyword>
<keyword id="KW-0805">Transcription regulation</keyword>
<protein>
    <recommendedName>
        <fullName>Homeobox protein Hox-D10</fullName>
    </recommendedName>
</protein>
<reference key="1">
    <citation type="journal article" date="2000" name="Proc. Natl. Acad. Sci. U.S.A.">
        <title>Hox cluster genomics in the horn shark, Heterodontus francisci.</title>
        <authorList>
            <person name="Kim C.B."/>
            <person name="Amemiya C."/>
            <person name="Bailey W."/>
            <person name="Kawasaki K."/>
            <person name="Mezey J."/>
            <person name="Miller W."/>
            <person name="Minoshima S."/>
            <person name="Shimizu N."/>
            <person name="Wagner G."/>
            <person name="Ruddle F."/>
        </authorList>
    </citation>
    <scope>NUCLEOTIDE SEQUENCE [GENOMIC DNA]</scope>
</reference>
<accession>Q9IA14</accession>
<dbReference type="EMBL" id="AF224263">
    <property type="protein sequence ID" value="AAF44634.1"/>
    <property type="molecule type" value="Genomic_DNA"/>
</dbReference>
<dbReference type="SMR" id="Q9IA14"/>
<dbReference type="GO" id="GO:0005634">
    <property type="term" value="C:nucleus"/>
    <property type="evidence" value="ECO:0007669"/>
    <property type="project" value="UniProtKB-SubCell"/>
</dbReference>
<dbReference type="GO" id="GO:0000981">
    <property type="term" value="F:DNA-binding transcription factor activity, RNA polymerase II-specific"/>
    <property type="evidence" value="ECO:0007669"/>
    <property type="project" value="InterPro"/>
</dbReference>
<dbReference type="GO" id="GO:0000978">
    <property type="term" value="F:RNA polymerase II cis-regulatory region sequence-specific DNA binding"/>
    <property type="evidence" value="ECO:0007669"/>
    <property type="project" value="TreeGrafter"/>
</dbReference>
<dbReference type="CDD" id="cd00086">
    <property type="entry name" value="homeodomain"/>
    <property type="match status" value="1"/>
</dbReference>
<dbReference type="FunFam" id="1.10.10.60:FF:000018">
    <property type="entry name" value="Homeobox A10"/>
    <property type="match status" value="1"/>
</dbReference>
<dbReference type="Gene3D" id="1.10.10.60">
    <property type="entry name" value="Homeodomain-like"/>
    <property type="match status" value="1"/>
</dbReference>
<dbReference type="InterPro" id="IPR001356">
    <property type="entry name" value="HD"/>
</dbReference>
<dbReference type="InterPro" id="IPR020479">
    <property type="entry name" value="HD_metazoa"/>
</dbReference>
<dbReference type="InterPro" id="IPR017970">
    <property type="entry name" value="Homeobox_CS"/>
</dbReference>
<dbReference type="InterPro" id="IPR009057">
    <property type="entry name" value="Homeodomain-like_sf"/>
</dbReference>
<dbReference type="InterPro" id="IPR046333">
    <property type="entry name" value="HXA10/ABDB-like"/>
</dbReference>
<dbReference type="PANTHER" id="PTHR45874">
    <property type="entry name" value="HOMEOBOX PROTEIN ABDOMINAL-B"/>
    <property type="match status" value="1"/>
</dbReference>
<dbReference type="PANTHER" id="PTHR45874:SF5">
    <property type="entry name" value="HOMEOBOX PROTEIN HOX-D10"/>
    <property type="match status" value="1"/>
</dbReference>
<dbReference type="Pfam" id="PF00046">
    <property type="entry name" value="Homeodomain"/>
    <property type="match status" value="1"/>
</dbReference>
<dbReference type="PRINTS" id="PR00024">
    <property type="entry name" value="HOMEOBOX"/>
</dbReference>
<dbReference type="SMART" id="SM00389">
    <property type="entry name" value="HOX"/>
    <property type="match status" value="1"/>
</dbReference>
<dbReference type="SUPFAM" id="SSF46689">
    <property type="entry name" value="Homeodomain-like"/>
    <property type="match status" value="1"/>
</dbReference>
<dbReference type="PROSITE" id="PS00027">
    <property type="entry name" value="HOMEOBOX_1"/>
    <property type="match status" value="1"/>
</dbReference>
<dbReference type="PROSITE" id="PS50071">
    <property type="entry name" value="HOMEOBOX_2"/>
    <property type="match status" value="1"/>
</dbReference>
<comment type="function">
    <text evidence="1">Sequence-specific transcription factor which is part of a developmental regulatory system that provides cells with specific positional identities on the anterior-posterior axis.</text>
</comment>
<comment type="subcellular location">
    <subcellularLocation>
        <location evidence="2">Nucleus</location>
    </subcellularLocation>
</comment>
<comment type="similarity">
    <text evidence="4">Belongs to the Abd-B homeobox family.</text>
</comment>
<evidence type="ECO:0000250" key="1"/>
<evidence type="ECO:0000255" key="2">
    <source>
        <dbReference type="PROSITE-ProRule" id="PRU00108"/>
    </source>
</evidence>
<evidence type="ECO:0000256" key="3">
    <source>
        <dbReference type="SAM" id="MobiDB-lite"/>
    </source>
</evidence>
<evidence type="ECO:0000305" key="4"/>
<feature type="chain" id="PRO_0000200230" description="Homeobox protein Hox-D10">
    <location>
        <begin position="1"/>
        <end position="336"/>
    </location>
</feature>
<feature type="DNA-binding region" description="Homeobox" evidence="2">
    <location>
        <begin position="262"/>
        <end position="321"/>
    </location>
</feature>
<feature type="region of interest" description="Disordered" evidence="3">
    <location>
        <begin position="193"/>
        <end position="217"/>
    </location>
</feature>
<gene>
    <name type="primary">HOXD10</name>
</gene>
<sequence length="336" mass="38019">MSCPNSSPATNSFLVDSLISACRGDSFYSTSSMYMPSSTDMGTYGMQTCGLLPTMTKRGEVNHQNMSISVHPYLSQVDGWADPSRPCRIEQPVTPQMPTCSFPASVKEESTCCMYNSDKRAKLNPTAIPAYPRLVSENCSIENPEIPIPGYFRLCQAYPLEKSLDYNYAGEISSNVMPQSNLGLISKLQVSSQPPMERKINEKPNAQESTKGIYVESPEPKPRLLEVSATAEGAATSSELSDNETKEEIKTPISNWLTAKSGRKKRCPYTKYQTLELEKEFLFNMYLTRERRLEISKSVNLTDRQVKIWFQNRRMKLKKMNRETRIRELTTNLTFS</sequence>
<organism>
    <name type="scientific">Heterodontus francisci</name>
    <name type="common">Horn shark</name>
    <name type="synonym">Cestracion francisci</name>
    <dbReference type="NCBI Taxonomy" id="7792"/>
    <lineage>
        <taxon>Eukaryota</taxon>
        <taxon>Metazoa</taxon>
        <taxon>Chordata</taxon>
        <taxon>Craniata</taxon>
        <taxon>Vertebrata</taxon>
        <taxon>Chondrichthyes</taxon>
        <taxon>Elasmobranchii</taxon>
        <taxon>Galeomorphii</taxon>
        <taxon>Heterodontoidea</taxon>
        <taxon>Heterodontiformes</taxon>
        <taxon>Heterodontidae</taxon>
        <taxon>Heterodontus</taxon>
    </lineage>
</organism>